<name>PSA_GORB4</name>
<proteinExistence type="inferred from homology"/>
<comment type="function">
    <text evidence="1">Component of the proteasome core, a large protease complex with broad specificity involved in protein degradation.</text>
</comment>
<comment type="activity regulation">
    <text evidence="1">The formation of the proteasomal ATPase ARC-20S proteasome complex, likely via the docking of the C-termini of ARC into the intersubunit pockets in the alpha-rings, may trigger opening of the gate for substrate entry. Interconversion between the open-gate and close-gate conformations leads to a dynamic regulation of the 20S proteasome proteolysis activity.</text>
</comment>
<comment type="pathway">
    <text evidence="1">Protein degradation; proteasomal Pup-dependent pathway.</text>
</comment>
<comment type="subunit">
    <text evidence="1">The 20S proteasome core is composed of 14 alpha and 14 beta subunits that assemble into four stacked heptameric rings, resulting in a barrel-shaped structure. The two inner rings, each composed of seven catalytic beta subunits, are sandwiched by two outer rings, each composed of seven alpha subunits. The catalytic chamber with the active sites is on the inside of the barrel. Has a gated structure, the ends of the cylinder being occluded by the N-termini of the alpha-subunits. Is capped by the proteasome-associated ATPase, ARC.</text>
</comment>
<comment type="subcellular location">
    <subcellularLocation>
        <location evidence="1">Cytoplasm</location>
    </subcellularLocation>
</comment>
<comment type="similarity">
    <text evidence="1">Belongs to the peptidase T1A family.</text>
</comment>
<protein>
    <recommendedName>
        <fullName evidence="1">Proteasome subunit alpha</fullName>
    </recommendedName>
    <alternativeName>
        <fullName evidence="1">20S proteasome alpha subunit</fullName>
    </alternativeName>
    <alternativeName>
        <fullName evidence="1">Proteasome core protein PrcA</fullName>
    </alternativeName>
</protein>
<dbReference type="EMBL" id="CP001802">
    <property type="protein sequence ID" value="ACY21705.1"/>
    <property type="molecule type" value="Genomic_DNA"/>
</dbReference>
<dbReference type="RefSeq" id="WP_012834260.1">
    <property type="nucleotide sequence ID" value="NC_013441.1"/>
</dbReference>
<dbReference type="SMR" id="D0LDT2"/>
<dbReference type="STRING" id="526226.Gbro_2464"/>
<dbReference type="KEGG" id="gbr:Gbro_2464"/>
<dbReference type="eggNOG" id="COG0638">
    <property type="taxonomic scope" value="Bacteria"/>
</dbReference>
<dbReference type="HOGENOM" id="CLU_071031_0_0_11"/>
<dbReference type="OrthoDB" id="9775643at2"/>
<dbReference type="UniPathway" id="UPA00997"/>
<dbReference type="Proteomes" id="UP000001219">
    <property type="component" value="Chromosome"/>
</dbReference>
<dbReference type="GO" id="GO:0005737">
    <property type="term" value="C:cytoplasm"/>
    <property type="evidence" value="ECO:0007669"/>
    <property type="project" value="UniProtKB-SubCell"/>
</dbReference>
<dbReference type="GO" id="GO:0019773">
    <property type="term" value="C:proteasome core complex, alpha-subunit complex"/>
    <property type="evidence" value="ECO:0007669"/>
    <property type="project" value="UniProtKB-UniRule"/>
</dbReference>
<dbReference type="GO" id="GO:0004298">
    <property type="term" value="F:threonine-type endopeptidase activity"/>
    <property type="evidence" value="ECO:0007669"/>
    <property type="project" value="InterPro"/>
</dbReference>
<dbReference type="GO" id="GO:0019941">
    <property type="term" value="P:modification-dependent protein catabolic process"/>
    <property type="evidence" value="ECO:0007669"/>
    <property type="project" value="UniProtKB-UniRule"/>
</dbReference>
<dbReference type="GO" id="GO:0010498">
    <property type="term" value="P:proteasomal protein catabolic process"/>
    <property type="evidence" value="ECO:0007669"/>
    <property type="project" value="UniProtKB-UniRule"/>
</dbReference>
<dbReference type="CDD" id="cd01901">
    <property type="entry name" value="Ntn_hydrolase"/>
    <property type="match status" value="1"/>
</dbReference>
<dbReference type="Gene3D" id="3.60.20.10">
    <property type="entry name" value="Glutamine Phosphoribosylpyrophosphate, subunit 1, domain 1"/>
    <property type="match status" value="1"/>
</dbReference>
<dbReference type="HAMAP" id="MF_00289_B">
    <property type="entry name" value="Proteasome_A_B"/>
    <property type="match status" value="1"/>
</dbReference>
<dbReference type="InterPro" id="IPR029055">
    <property type="entry name" value="Ntn_hydrolases_N"/>
</dbReference>
<dbReference type="InterPro" id="IPR023332">
    <property type="entry name" value="Proteasome_alpha-type"/>
</dbReference>
<dbReference type="InterPro" id="IPR022296">
    <property type="entry name" value="Proteasome_asu_bac"/>
</dbReference>
<dbReference type="InterPro" id="IPR001353">
    <property type="entry name" value="Proteasome_sua/b"/>
</dbReference>
<dbReference type="NCBIfam" id="TIGR03691">
    <property type="entry name" value="20S_bact_alpha"/>
    <property type="match status" value="1"/>
</dbReference>
<dbReference type="Pfam" id="PF00227">
    <property type="entry name" value="Proteasome"/>
    <property type="match status" value="1"/>
</dbReference>
<dbReference type="SUPFAM" id="SSF56235">
    <property type="entry name" value="N-terminal nucleophile aminohydrolases (Ntn hydrolases)"/>
    <property type="match status" value="1"/>
</dbReference>
<dbReference type="PROSITE" id="PS51475">
    <property type="entry name" value="PROTEASOME_ALPHA_2"/>
    <property type="match status" value="1"/>
</dbReference>
<keyword id="KW-0963">Cytoplasm</keyword>
<keyword id="KW-0647">Proteasome</keyword>
<keyword id="KW-1185">Reference proteome</keyword>
<accession>D0LDT2</accession>
<organism>
    <name type="scientific">Gordonia bronchialis (strain ATCC 25592 / DSM 43247 / BCRC 13721 / JCM 3198 / KCTC 3076 / NBRC 16047 / NCTC 10667)</name>
    <name type="common">Rhodococcus bronchialis</name>
    <dbReference type="NCBI Taxonomy" id="526226"/>
    <lineage>
        <taxon>Bacteria</taxon>
        <taxon>Bacillati</taxon>
        <taxon>Actinomycetota</taxon>
        <taxon>Actinomycetes</taxon>
        <taxon>Mycobacteriales</taxon>
        <taxon>Gordoniaceae</taxon>
        <taxon>Gordonia</taxon>
    </lineage>
</organism>
<reference key="1">
    <citation type="submission" date="2009-10" db="EMBL/GenBank/DDBJ databases">
        <title>The complete chromosome of Gordonia bronchialis DSM 43247.</title>
        <authorList>
            <consortium name="US DOE Joint Genome Institute (JGI-PGF)"/>
            <person name="Lucas S."/>
            <person name="Copeland A."/>
            <person name="Lapidus A."/>
            <person name="Glavina del Rio T."/>
            <person name="Dalin E."/>
            <person name="Tice H."/>
            <person name="Bruce D."/>
            <person name="Goodwin L."/>
            <person name="Pitluck S."/>
            <person name="Kyrpides N."/>
            <person name="Mavromatis K."/>
            <person name="Ivanova N."/>
            <person name="Ovchinnikova G."/>
            <person name="Saunders E."/>
            <person name="Brettin T."/>
            <person name="Detter J.C."/>
            <person name="Han C."/>
            <person name="Larimer F."/>
            <person name="Land M."/>
            <person name="Hauser L."/>
            <person name="Markowitz V."/>
            <person name="Cheng J.-F."/>
            <person name="Hugenholtz P."/>
            <person name="Woyke T."/>
            <person name="Wu D."/>
            <person name="Jando M."/>
            <person name="Schneider S."/>
            <person name="Goeker M."/>
            <person name="Klenk H.-P."/>
            <person name="Eisen J.A."/>
        </authorList>
    </citation>
    <scope>NUCLEOTIDE SEQUENCE [LARGE SCALE GENOMIC DNA]</scope>
    <source>
        <strain>ATCC 25592 / DSM 43247 / BCRC 13721 / JCM 3198 / KCTC 3076 / NBRC 16047 / NCTC 10667</strain>
    </source>
</reference>
<sequence>MTFPYYASAEQIMRDRSELARKGIARGRSVVILTYADGVLFVAENPSNTLRKTSEIYDRIGFAAVGKYNEFESLRKAGIQLADMRGYSYDRADVSGLSLANTYANALGGVFTEQPKPFEVELCVAEVARYGKPKPSQLYRISYDGSITDETRFLVMGGATEPIAAALKESYQPDLELGAAVAVAVGALATPADSGNGTAASPRVLTAGDLEVAILDRNRPRRAFRRLSAAALEELLPTTGESDAGDSGADGSPSGDSPDTSA</sequence>
<evidence type="ECO:0000255" key="1">
    <source>
        <dbReference type="HAMAP-Rule" id="MF_00289"/>
    </source>
</evidence>
<evidence type="ECO:0000256" key="2">
    <source>
        <dbReference type="SAM" id="MobiDB-lite"/>
    </source>
</evidence>
<gene>
    <name evidence="1" type="primary">prcA</name>
    <name type="ordered locus">Gbro_2464</name>
</gene>
<feature type="chain" id="PRO_0000397141" description="Proteasome subunit alpha">
    <location>
        <begin position="1"/>
        <end position="262"/>
    </location>
</feature>
<feature type="region of interest" description="Disordered" evidence="2">
    <location>
        <begin position="235"/>
        <end position="262"/>
    </location>
</feature>